<accession>A5VP46</accession>
<protein>
    <recommendedName>
        <fullName evidence="1">Homoserine kinase</fullName>
        <shortName evidence="1">HK</shortName>
        <shortName evidence="1">HSK</shortName>
        <ecNumber evidence="1">2.7.1.39</ecNumber>
    </recommendedName>
</protein>
<proteinExistence type="inferred from homology"/>
<gene>
    <name evidence="1" type="primary">thrB</name>
    <name type="ordered locus">BOV_0481</name>
</gene>
<evidence type="ECO:0000255" key="1">
    <source>
        <dbReference type="HAMAP-Rule" id="MF_00301"/>
    </source>
</evidence>
<feature type="chain" id="PRO_1000022576" description="Homoserine kinase">
    <location>
        <begin position="1"/>
        <end position="326"/>
    </location>
</feature>
<organism>
    <name type="scientific">Brucella ovis (strain ATCC 25840 / 63/290 / NCTC 10512)</name>
    <dbReference type="NCBI Taxonomy" id="444178"/>
    <lineage>
        <taxon>Bacteria</taxon>
        <taxon>Pseudomonadati</taxon>
        <taxon>Pseudomonadota</taxon>
        <taxon>Alphaproteobacteria</taxon>
        <taxon>Hyphomicrobiales</taxon>
        <taxon>Brucellaceae</taxon>
        <taxon>Brucella/Ochrobactrum group</taxon>
        <taxon>Brucella</taxon>
    </lineage>
</organism>
<keyword id="KW-0028">Amino-acid biosynthesis</keyword>
<keyword id="KW-0067">ATP-binding</keyword>
<keyword id="KW-0418">Kinase</keyword>
<keyword id="KW-0547">Nucleotide-binding</keyword>
<keyword id="KW-0791">Threonine biosynthesis</keyword>
<keyword id="KW-0808">Transferase</keyword>
<name>KHSE_BRUO2</name>
<dbReference type="EC" id="2.7.1.39" evidence="1"/>
<dbReference type="EMBL" id="CP000708">
    <property type="protein sequence ID" value="ABQ61511.1"/>
    <property type="molecule type" value="Genomic_DNA"/>
</dbReference>
<dbReference type="RefSeq" id="WP_005978415.1">
    <property type="nucleotide sequence ID" value="NC_009505.1"/>
</dbReference>
<dbReference type="SMR" id="A5VP46"/>
<dbReference type="GeneID" id="45123956"/>
<dbReference type="KEGG" id="bov:BOV_0481"/>
<dbReference type="HOGENOM" id="CLU_053300_1_0_5"/>
<dbReference type="PhylomeDB" id="A5VP46"/>
<dbReference type="UniPathway" id="UPA00050">
    <property type="reaction ID" value="UER00064"/>
</dbReference>
<dbReference type="Proteomes" id="UP000006383">
    <property type="component" value="Chromosome I"/>
</dbReference>
<dbReference type="GO" id="GO:0005524">
    <property type="term" value="F:ATP binding"/>
    <property type="evidence" value="ECO:0007669"/>
    <property type="project" value="UniProtKB-KW"/>
</dbReference>
<dbReference type="GO" id="GO:0004413">
    <property type="term" value="F:homoserine kinase activity"/>
    <property type="evidence" value="ECO:0007669"/>
    <property type="project" value="UniProtKB-UniRule"/>
</dbReference>
<dbReference type="GO" id="GO:0009088">
    <property type="term" value="P:threonine biosynthetic process"/>
    <property type="evidence" value="ECO:0007669"/>
    <property type="project" value="UniProtKB-UniRule"/>
</dbReference>
<dbReference type="CDD" id="cd05153">
    <property type="entry name" value="HomoserineK_II"/>
    <property type="match status" value="1"/>
</dbReference>
<dbReference type="Gene3D" id="3.90.1200.10">
    <property type="match status" value="1"/>
</dbReference>
<dbReference type="Gene3D" id="3.30.200.20">
    <property type="entry name" value="Phosphorylase Kinase, domain 1"/>
    <property type="match status" value="1"/>
</dbReference>
<dbReference type="HAMAP" id="MF_00301">
    <property type="entry name" value="Homoser_kinase_2"/>
    <property type="match status" value="1"/>
</dbReference>
<dbReference type="InterPro" id="IPR002575">
    <property type="entry name" value="Aminoglycoside_PTrfase"/>
</dbReference>
<dbReference type="InterPro" id="IPR005280">
    <property type="entry name" value="Homoserine_kinase_II"/>
</dbReference>
<dbReference type="InterPro" id="IPR011009">
    <property type="entry name" value="Kinase-like_dom_sf"/>
</dbReference>
<dbReference type="InterPro" id="IPR050249">
    <property type="entry name" value="Pseudomonas-type_ThrB"/>
</dbReference>
<dbReference type="NCBIfam" id="NF003558">
    <property type="entry name" value="PRK05231.1"/>
    <property type="match status" value="1"/>
</dbReference>
<dbReference type="NCBIfam" id="TIGR00938">
    <property type="entry name" value="thrB_alt"/>
    <property type="match status" value="1"/>
</dbReference>
<dbReference type="PANTHER" id="PTHR21064:SF6">
    <property type="entry name" value="AMINOGLYCOSIDE PHOSPHOTRANSFERASE DOMAIN-CONTAINING PROTEIN"/>
    <property type="match status" value="1"/>
</dbReference>
<dbReference type="PANTHER" id="PTHR21064">
    <property type="entry name" value="AMINOGLYCOSIDE PHOSPHOTRANSFERASE DOMAIN-CONTAINING PROTEIN-RELATED"/>
    <property type="match status" value="1"/>
</dbReference>
<dbReference type="Pfam" id="PF01636">
    <property type="entry name" value="APH"/>
    <property type="match status" value="1"/>
</dbReference>
<dbReference type="SUPFAM" id="SSF56112">
    <property type="entry name" value="Protein kinase-like (PK-like)"/>
    <property type="match status" value="1"/>
</dbReference>
<reference key="1">
    <citation type="journal article" date="2009" name="PLoS ONE">
        <title>Genome degradation in Brucella ovis corresponds with narrowing of its host range and tissue tropism.</title>
        <authorList>
            <person name="Tsolis R.M."/>
            <person name="Seshadri R."/>
            <person name="Santos R.L."/>
            <person name="Sangari F.J."/>
            <person name="Lobo J.M."/>
            <person name="de Jong M.F."/>
            <person name="Ren Q."/>
            <person name="Myers G."/>
            <person name="Brinkac L.M."/>
            <person name="Nelson W.C."/>
            <person name="Deboy R.T."/>
            <person name="Angiuoli S."/>
            <person name="Khouri H."/>
            <person name="Dimitrov G."/>
            <person name="Robinson J.R."/>
            <person name="Mulligan S."/>
            <person name="Walker R.L."/>
            <person name="Elzer P.E."/>
            <person name="Hassan K.A."/>
            <person name="Paulsen I.T."/>
        </authorList>
    </citation>
    <scope>NUCLEOTIDE SEQUENCE [LARGE SCALE GENOMIC DNA]</scope>
    <source>
        <strain>ATCC 25840 / 63/290 / NCTC 10512</strain>
    </source>
</reference>
<sequence length="326" mass="36574">MAVYTDINEIELGAFLRHYDIGTLTSYKGIAEGVENSNYLLHTSSGSFILTLYEKRTNREDLPFFLGLMQHLAKRGLECPQPVVRNDGAMIGQLAGRPAAIVTFLEGMWMRRPTVAHCEAVGEGLAHMHLAGADFPMRRRNGLTLPDWRPLWNLSRKCADTVEQGLVAETEADLDFLEKNWPADLPQGVIHADLFPDNAFFLGDRLSGFIDFYFACTDILAYDVAVCLNAWCFEKDFSYNRTKGAALLRGYTSVRPLSEAEADALPVLARGAAVRFMLTRLYDWLTVPAGSFVVKKDPMEYVRGMRFHRQIESAAEYGLEMQEVAA</sequence>
<comment type="catalytic activity">
    <reaction evidence="1">
        <text>L-homoserine + ATP = O-phospho-L-homoserine + ADP + H(+)</text>
        <dbReference type="Rhea" id="RHEA:13985"/>
        <dbReference type="ChEBI" id="CHEBI:15378"/>
        <dbReference type="ChEBI" id="CHEBI:30616"/>
        <dbReference type="ChEBI" id="CHEBI:57476"/>
        <dbReference type="ChEBI" id="CHEBI:57590"/>
        <dbReference type="ChEBI" id="CHEBI:456216"/>
        <dbReference type="EC" id="2.7.1.39"/>
    </reaction>
</comment>
<comment type="pathway">
    <text evidence="1">Amino-acid biosynthesis; L-threonine biosynthesis; L-threonine from L-aspartate: step 4/5.</text>
</comment>
<comment type="similarity">
    <text evidence="1">Belongs to the pseudomonas-type ThrB family.</text>
</comment>